<gene>
    <name type="primary">hormad1</name>
</gene>
<accession>Q5M7C8</accession>
<feature type="chain" id="PRO_0000284668" description="HORMA domain-containing protein 1">
    <location>
        <begin position="1"/>
        <end position="386"/>
    </location>
</feature>
<feature type="domain" description="HORMA" evidence="2">
    <location>
        <begin position="24"/>
        <end position="224"/>
    </location>
</feature>
<feature type="region of interest" description="Disordered" evidence="3">
    <location>
        <begin position="237"/>
        <end position="274"/>
    </location>
</feature>
<feature type="region of interest" description="Disordered" evidence="3">
    <location>
        <begin position="289"/>
        <end position="386"/>
    </location>
</feature>
<feature type="compositionally biased region" description="Polar residues" evidence="3">
    <location>
        <begin position="289"/>
        <end position="313"/>
    </location>
</feature>
<feature type="compositionally biased region" description="Basic and acidic residues" evidence="3">
    <location>
        <begin position="329"/>
        <end position="343"/>
    </location>
</feature>
<sequence length="386" mass="43600">MATAQMHRNKVNSVALPSRVATETQSLILVKRLLAVSVSCITYLRGLFPEYAYGTRYLDDICVKILREDKSCPGSTQLVKWMLGCYDALQKKYLRMVMLAIYTDPEDPQTVTECYQFKFKYTASGPVMDFVSNNSNSVSTCSDAKKTSILLIRKLYILMQNLGPLPNDVCLTMKLFYYDEVTPADYQPPGFKEGTCEGLMFEGEPMYLNVGEVATPFHVLKVKVTTEKERMENIEKSIFKKQASKQPQTDEEKPDLSINDDLAQDNNGDRKRDDIETLKVEDLNLTCQEDGNLQSDDSQNSALADSQEKTSQAAPPAFGRKTRSGRIFQKPDLELKNQKESARASKGNQQARKPEKRSQSFEITGSQEDPAVAKRRKFSEPRTPLN</sequence>
<protein>
    <recommendedName>
        <fullName>HORMA domain-containing protein 1</fullName>
    </recommendedName>
</protein>
<comment type="function">
    <text evidence="1">Plays a key role in meiotic progression by ensuring that sufficient numbers of processed DNA double-strand breaks (DSBs) are available for successful homology search, promoting synaptonemal-complex formation independently and playing key role in the male mid-pachytene checkpoint and the female meiotic prophase checkpoint.</text>
</comment>
<comment type="subcellular location">
    <subcellularLocation>
        <location evidence="1">Nucleus</location>
    </subcellularLocation>
    <subcellularLocation>
        <location evidence="1">Chromosome</location>
    </subcellularLocation>
    <text evidence="1">Preferentially localizes to unsynapsed or desynapsed chromosomal regions during the prophase I stage of meiosis.</text>
</comment>
<organism>
    <name type="scientific">Xenopus laevis</name>
    <name type="common">African clawed frog</name>
    <dbReference type="NCBI Taxonomy" id="8355"/>
    <lineage>
        <taxon>Eukaryota</taxon>
        <taxon>Metazoa</taxon>
        <taxon>Chordata</taxon>
        <taxon>Craniata</taxon>
        <taxon>Vertebrata</taxon>
        <taxon>Euteleostomi</taxon>
        <taxon>Amphibia</taxon>
        <taxon>Batrachia</taxon>
        <taxon>Anura</taxon>
        <taxon>Pipoidea</taxon>
        <taxon>Pipidae</taxon>
        <taxon>Xenopodinae</taxon>
        <taxon>Xenopus</taxon>
        <taxon>Xenopus</taxon>
    </lineage>
</organism>
<proteinExistence type="evidence at transcript level"/>
<keyword id="KW-0158">Chromosome</keyword>
<keyword id="KW-0221">Differentiation</keyword>
<keyword id="KW-0469">Meiosis</keyword>
<keyword id="KW-0539">Nucleus</keyword>
<keyword id="KW-0896">Oogenesis</keyword>
<keyword id="KW-1185">Reference proteome</keyword>
<keyword id="KW-0744">Spermatogenesis</keyword>
<reference key="1">
    <citation type="submission" date="2004-12" db="EMBL/GenBank/DDBJ databases">
        <authorList>
            <consortium name="NIH - Xenopus Gene Collection (XGC) project"/>
        </authorList>
    </citation>
    <scope>NUCLEOTIDE SEQUENCE [LARGE SCALE MRNA]</scope>
    <source>
        <tissue>Testis</tissue>
    </source>
</reference>
<dbReference type="EMBL" id="BC088705">
    <property type="protein sequence ID" value="AAH88705.1"/>
    <property type="molecule type" value="mRNA"/>
</dbReference>
<dbReference type="RefSeq" id="NP_001088894.1">
    <property type="nucleotide sequence ID" value="NM_001095425.1"/>
</dbReference>
<dbReference type="SMR" id="Q5M7C8"/>
<dbReference type="DNASU" id="496240"/>
<dbReference type="GeneID" id="496240"/>
<dbReference type="KEGG" id="xla:496240"/>
<dbReference type="AGR" id="Xenbase:XB-GENE-986781"/>
<dbReference type="CTD" id="496240"/>
<dbReference type="Xenbase" id="XB-GENE-986781">
    <property type="gene designation" value="hormad1.S"/>
</dbReference>
<dbReference type="OrthoDB" id="1928087at2759"/>
<dbReference type="Proteomes" id="UP000186698">
    <property type="component" value="Chromosome 8S"/>
</dbReference>
<dbReference type="Bgee" id="496240">
    <property type="expression patterns" value="Expressed in testis and 3 other cell types or tissues"/>
</dbReference>
<dbReference type="GO" id="GO:0005694">
    <property type="term" value="C:chromosome"/>
    <property type="evidence" value="ECO:0000250"/>
    <property type="project" value="UniProtKB"/>
</dbReference>
<dbReference type="GO" id="GO:0005634">
    <property type="term" value="C:nucleus"/>
    <property type="evidence" value="ECO:0000250"/>
    <property type="project" value="UniProtKB"/>
</dbReference>
<dbReference type="GO" id="GO:0051321">
    <property type="term" value="P:meiotic cell cycle"/>
    <property type="evidence" value="ECO:0000250"/>
    <property type="project" value="UniProtKB"/>
</dbReference>
<dbReference type="GO" id="GO:0042138">
    <property type="term" value="P:meiotic DNA double-strand break formation"/>
    <property type="evidence" value="ECO:0000250"/>
    <property type="project" value="UniProtKB"/>
</dbReference>
<dbReference type="GO" id="GO:0051598">
    <property type="term" value="P:meiotic recombination checkpoint signaling"/>
    <property type="evidence" value="ECO:0000250"/>
    <property type="project" value="UniProtKB"/>
</dbReference>
<dbReference type="GO" id="GO:0051177">
    <property type="term" value="P:meiotic sister chromatid cohesion"/>
    <property type="evidence" value="ECO:0000250"/>
    <property type="project" value="UniProtKB"/>
</dbReference>
<dbReference type="GO" id="GO:0048477">
    <property type="term" value="P:oogenesis"/>
    <property type="evidence" value="ECO:0000250"/>
    <property type="project" value="UniProtKB"/>
</dbReference>
<dbReference type="GO" id="GO:0060629">
    <property type="term" value="P:regulation of homologous chromosome segregation"/>
    <property type="evidence" value="ECO:0000250"/>
    <property type="project" value="UniProtKB"/>
</dbReference>
<dbReference type="GO" id="GO:0007283">
    <property type="term" value="P:spermatogenesis"/>
    <property type="evidence" value="ECO:0000250"/>
    <property type="project" value="UniProtKB"/>
</dbReference>
<dbReference type="GO" id="GO:0007130">
    <property type="term" value="P:synaptonemal complex assembly"/>
    <property type="evidence" value="ECO:0000250"/>
    <property type="project" value="UniProtKB"/>
</dbReference>
<dbReference type="FunFam" id="3.30.900.10:FF:000006">
    <property type="entry name" value="HORMA domain-containing protein 1"/>
    <property type="match status" value="1"/>
</dbReference>
<dbReference type="Gene3D" id="3.30.900.10">
    <property type="entry name" value="HORMA domain"/>
    <property type="match status" value="1"/>
</dbReference>
<dbReference type="InterPro" id="IPR003511">
    <property type="entry name" value="HORMA_dom"/>
</dbReference>
<dbReference type="InterPro" id="IPR036570">
    <property type="entry name" value="HORMA_dom_sf"/>
</dbReference>
<dbReference type="InterPro" id="IPR051294">
    <property type="entry name" value="HORMA_MeioticProgression"/>
</dbReference>
<dbReference type="PANTHER" id="PTHR48225">
    <property type="entry name" value="HORMA DOMAIN-CONTAINING PROTEIN 1"/>
    <property type="match status" value="1"/>
</dbReference>
<dbReference type="PANTHER" id="PTHR48225:SF7">
    <property type="entry name" value="MEIOSIS-SPECIFIC PROTEIN HOP1"/>
    <property type="match status" value="1"/>
</dbReference>
<dbReference type="Pfam" id="PF02301">
    <property type="entry name" value="HORMA"/>
    <property type="match status" value="1"/>
</dbReference>
<dbReference type="SUPFAM" id="SSF56019">
    <property type="entry name" value="The spindle assembly checkpoint protein mad2"/>
    <property type="match status" value="1"/>
</dbReference>
<dbReference type="PROSITE" id="PS50815">
    <property type="entry name" value="HORMA"/>
    <property type="match status" value="1"/>
</dbReference>
<evidence type="ECO:0000250" key="1">
    <source>
        <dbReference type="UniProtKB" id="Q9D5T7"/>
    </source>
</evidence>
<evidence type="ECO:0000255" key="2">
    <source>
        <dbReference type="PROSITE-ProRule" id="PRU00109"/>
    </source>
</evidence>
<evidence type="ECO:0000256" key="3">
    <source>
        <dbReference type="SAM" id="MobiDB-lite"/>
    </source>
</evidence>
<name>HORM1_XENLA</name>